<comment type="function">
    <text evidence="1">Involved in the biosynthesis of branched-chain amino acids (BCAA). Catalyzes an alkyl-migration followed by a ketol-acid reduction of (S)-2-acetolactate (S2AL) to yield (R)-2,3-dihydroxy-isovalerate. In the isomerase reaction, S2AL is rearranged via a Mg-dependent methyl migration to produce 3-hydroxy-3-methyl-2-ketobutyrate (HMKB). In the reductase reaction, this 2-ketoacid undergoes a metal-dependent reduction by NADPH to yield (R)-2,3-dihydroxy-isovalerate.</text>
</comment>
<comment type="catalytic activity">
    <reaction evidence="1">
        <text>(2R)-2,3-dihydroxy-3-methylbutanoate + NADP(+) = (2S)-2-acetolactate + NADPH + H(+)</text>
        <dbReference type="Rhea" id="RHEA:22068"/>
        <dbReference type="ChEBI" id="CHEBI:15378"/>
        <dbReference type="ChEBI" id="CHEBI:49072"/>
        <dbReference type="ChEBI" id="CHEBI:57783"/>
        <dbReference type="ChEBI" id="CHEBI:58349"/>
        <dbReference type="ChEBI" id="CHEBI:58476"/>
        <dbReference type="EC" id="1.1.1.86"/>
    </reaction>
</comment>
<comment type="catalytic activity">
    <reaction evidence="1">
        <text>(2R,3R)-2,3-dihydroxy-3-methylpentanoate + NADP(+) = (S)-2-ethyl-2-hydroxy-3-oxobutanoate + NADPH + H(+)</text>
        <dbReference type="Rhea" id="RHEA:13493"/>
        <dbReference type="ChEBI" id="CHEBI:15378"/>
        <dbReference type="ChEBI" id="CHEBI:49256"/>
        <dbReference type="ChEBI" id="CHEBI:49258"/>
        <dbReference type="ChEBI" id="CHEBI:57783"/>
        <dbReference type="ChEBI" id="CHEBI:58349"/>
        <dbReference type="EC" id="1.1.1.86"/>
    </reaction>
</comment>
<comment type="cofactor">
    <cofactor evidence="1">
        <name>Mg(2+)</name>
        <dbReference type="ChEBI" id="CHEBI:18420"/>
    </cofactor>
    <text evidence="1">Binds 2 magnesium ions per subunit.</text>
</comment>
<comment type="pathway">
    <text evidence="1">Amino-acid biosynthesis; L-isoleucine biosynthesis; L-isoleucine from 2-oxobutanoate: step 2/4.</text>
</comment>
<comment type="pathway">
    <text evidence="1">Amino-acid biosynthesis; L-valine biosynthesis; L-valine from pyruvate: step 2/4.</text>
</comment>
<comment type="similarity">
    <text evidence="1">Belongs to the ketol-acid reductoisomerase family.</text>
</comment>
<proteinExistence type="inferred from homology"/>
<keyword id="KW-0028">Amino-acid biosynthesis</keyword>
<keyword id="KW-0100">Branched-chain amino acid biosynthesis</keyword>
<keyword id="KW-0460">Magnesium</keyword>
<keyword id="KW-0479">Metal-binding</keyword>
<keyword id="KW-0521">NADP</keyword>
<keyword id="KW-0560">Oxidoreductase</keyword>
<keyword id="KW-0677">Repeat</keyword>
<protein>
    <recommendedName>
        <fullName evidence="1">Ketol-acid reductoisomerase (NADP(+))</fullName>
        <shortName evidence="1">KARI</shortName>
        <ecNumber evidence="1">1.1.1.86</ecNumber>
    </recommendedName>
    <alternativeName>
        <fullName evidence="1">Acetohydroxy-acid isomeroreductase</fullName>
        <shortName evidence="1">AHIR</shortName>
    </alternativeName>
    <alternativeName>
        <fullName evidence="1">Alpha-keto-beta-hydroxylacyl reductoisomerase</fullName>
    </alternativeName>
    <alternativeName>
        <fullName evidence="1">Ketol-acid reductoisomerase type 2</fullName>
    </alternativeName>
    <alternativeName>
        <fullName evidence="1">Ketol-acid reductoisomerase type II</fullName>
    </alternativeName>
</protein>
<organism>
    <name type="scientific">Marinomonas sp. (strain MWYL1)</name>
    <dbReference type="NCBI Taxonomy" id="400668"/>
    <lineage>
        <taxon>Bacteria</taxon>
        <taxon>Pseudomonadati</taxon>
        <taxon>Pseudomonadota</taxon>
        <taxon>Gammaproteobacteria</taxon>
        <taxon>Oceanospirillales</taxon>
        <taxon>Oceanospirillaceae</taxon>
        <taxon>Marinomonas</taxon>
    </lineage>
</organism>
<reference key="1">
    <citation type="submission" date="2007-06" db="EMBL/GenBank/DDBJ databases">
        <title>Complete sequence of Marinomonas sp. MWYL1.</title>
        <authorList>
            <consortium name="US DOE Joint Genome Institute"/>
            <person name="Copeland A."/>
            <person name="Lucas S."/>
            <person name="Lapidus A."/>
            <person name="Barry K."/>
            <person name="Glavina del Rio T."/>
            <person name="Dalin E."/>
            <person name="Tice H."/>
            <person name="Pitluck S."/>
            <person name="Kiss H."/>
            <person name="Brettin T."/>
            <person name="Bruce D."/>
            <person name="Detter J.C."/>
            <person name="Han C."/>
            <person name="Schmutz J."/>
            <person name="Larimer F."/>
            <person name="Land M."/>
            <person name="Hauser L."/>
            <person name="Kyrpides N."/>
            <person name="Kim E."/>
            <person name="Johnston A.W.B."/>
            <person name="Todd J.D."/>
            <person name="Rogers R."/>
            <person name="Wexler M."/>
            <person name="Bond P.L."/>
            <person name="Li Y."/>
            <person name="Richardson P."/>
        </authorList>
    </citation>
    <scope>NUCLEOTIDE SEQUENCE [LARGE SCALE GENOMIC DNA]</scope>
    <source>
        <strain>MWYL1</strain>
    </source>
</reference>
<evidence type="ECO:0000255" key="1">
    <source>
        <dbReference type="HAMAP-Rule" id="MF_00435"/>
    </source>
</evidence>
<evidence type="ECO:0000255" key="2">
    <source>
        <dbReference type="PROSITE-ProRule" id="PRU01197"/>
    </source>
</evidence>
<evidence type="ECO:0000255" key="3">
    <source>
        <dbReference type="PROSITE-ProRule" id="PRU01198"/>
    </source>
</evidence>
<dbReference type="EC" id="1.1.1.86" evidence="1"/>
<dbReference type="EMBL" id="CP000749">
    <property type="protein sequence ID" value="ABR72745.1"/>
    <property type="molecule type" value="Genomic_DNA"/>
</dbReference>
<dbReference type="SMR" id="A6W216"/>
<dbReference type="STRING" id="400668.Mmwyl1_3846"/>
<dbReference type="KEGG" id="mmw:Mmwyl1_3846"/>
<dbReference type="eggNOG" id="COG0059">
    <property type="taxonomic scope" value="Bacteria"/>
</dbReference>
<dbReference type="HOGENOM" id="CLU_551905_0_0_6"/>
<dbReference type="OrthoDB" id="9804088at2"/>
<dbReference type="UniPathway" id="UPA00047">
    <property type="reaction ID" value="UER00056"/>
</dbReference>
<dbReference type="UniPathway" id="UPA00049">
    <property type="reaction ID" value="UER00060"/>
</dbReference>
<dbReference type="GO" id="GO:0005829">
    <property type="term" value="C:cytosol"/>
    <property type="evidence" value="ECO:0007669"/>
    <property type="project" value="TreeGrafter"/>
</dbReference>
<dbReference type="GO" id="GO:0004455">
    <property type="term" value="F:ketol-acid reductoisomerase activity"/>
    <property type="evidence" value="ECO:0007669"/>
    <property type="project" value="UniProtKB-UniRule"/>
</dbReference>
<dbReference type="GO" id="GO:0000287">
    <property type="term" value="F:magnesium ion binding"/>
    <property type="evidence" value="ECO:0007669"/>
    <property type="project" value="UniProtKB-UniRule"/>
</dbReference>
<dbReference type="GO" id="GO:0009097">
    <property type="term" value="P:isoleucine biosynthetic process"/>
    <property type="evidence" value="ECO:0007669"/>
    <property type="project" value="UniProtKB-UniRule"/>
</dbReference>
<dbReference type="GO" id="GO:0009099">
    <property type="term" value="P:L-valine biosynthetic process"/>
    <property type="evidence" value="ECO:0007669"/>
    <property type="project" value="UniProtKB-UniRule"/>
</dbReference>
<dbReference type="Gene3D" id="1.10.1040.10">
    <property type="entry name" value="N-(1-d-carboxylethyl)-l-norvaline Dehydrogenase, domain 2"/>
    <property type="match status" value="1"/>
</dbReference>
<dbReference type="Gene3D" id="3.40.50.720">
    <property type="entry name" value="NAD(P)-binding Rossmann-like Domain"/>
    <property type="match status" value="1"/>
</dbReference>
<dbReference type="HAMAP" id="MF_00435">
    <property type="entry name" value="IlvC"/>
    <property type="match status" value="1"/>
</dbReference>
<dbReference type="InterPro" id="IPR008927">
    <property type="entry name" value="6-PGluconate_DH-like_C_sf"/>
</dbReference>
<dbReference type="InterPro" id="IPR013328">
    <property type="entry name" value="6PGD_dom2"/>
</dbReference>
<dbReference type="InterPro" id="IPR013023">
    <property type="entry name" value="KARI"/>
</dbReference>
<dbReference type="InterPro" id="IPR000506">
    <property type="entry name" value="KARI_C"/>
</dbReference>
<dbReference type="InterPro" id="IPR013116">
    <property type="entry name" value="KARI_N"/>
</dbReference>
<dbReference type="InterPro" id="IPR036291">
    <property type="entry name" value="NAD(P)-bd_dom_sf"/>
</dbReference>
<dbReference type="NCBIfam" id="TIGR00465">
    <property type="entry name" value="ilvC"/>
    <property type="match status" value="1"/>
</dbReference>
<dbReference type="NCBIfam" id="NF003557">
    <property type="entry name" value="PRK05225.1"/>
    <property type="match status" value="1"/>
</dbReference>
<dbReference type="PANTHER" id="PTHR21371">
    <property type="entry name" value="KETOL-ACID REDUCTOISOMERASE, MITOCHONDRIAL"/>
    <property type="match status" value="1"/>
</dbReference>
<dbReference type="PANTHER" id="PTHR21371:SF1">
    <property type="entry name" value="KETOL-ACID REDUCTOISOMERASE, MITOCHONDRIAL"/>
    <property type="match status" value="1"/>
</dbReference>
<dbReference type="Pfam" id="PF01450">
    <property type="entry name" value="KARI_C"/>
    <property type="match status" value="2"/>
</dbReference>
<dbReference type="Pfam" id="PF07991">
    <property type="entry name" value="KARI_N"/>
    <property type="match status" value="1"/>
</dbReference>
<dbReference type="SUPFAM" id="SSF48179">
    <property type="entry name" value="6-phosphogluconate dehydrogenase C-terminal domain-like"/>
    <property type="match status" value="2"/>
</dbReference>
<dbReference type="SUPFAM" id="SSF51735">
    <property type="entry name" value="NAD(P)-binding Rossmann-fold domains"/>
    <property type="match status" value="1"/>
</dbReference>
<dbReference type="PROSITE" id="PS51851">
    <property type="entry name" value="KARI_C"/>
    <property type="match status" value="2"/>
</dbReference>
<dbReference type="PROSITE" id="PS51850">
    <property type="entry name" value="KARI_N"/>
    <property type="match status" value="1"/>
</dbReference>
<accession>A6W216</accession>
<gene>
    <name evidence="1" type="primary">ilvC</name>
    <name type="ordered locus">Mmwyl1_3846</name>
</gene>
<feature type="chain" id="PRO_1000124306" description="Ketol-acid reductoisomerase (NADP(+))">
    <location>
        <begin position="1"/>
        <end position="490"/>
    </location>
</feature>
<feature type="domain" description="KARI N-terminal Rossmann" evidence="2">
    <location>
        <begin position="18"/>
        <end position="208"/>
    </location>
</feature>
<feature type="domain" description="KARI C-terminal knotted 1" evidence="3">
    <location>
        <begin position="209"/>
        <end position="344"/>
    </location>
</feature>
<feature type="domain" description="KARI C-terminal knotted 2" evidence="3">
    <location>
        <begin position="345"/>
        <end position="486"/>
    </location>
</feature>
<feature type="active site" evidence="1">
    <location>
        <position position="132"/>
    </location>
</feature>
<feature type="binding site" evidence="1">
    <location>
        <begin position="45"/>
        <end position="48"/>
    </location>
    <ligand>
        <name>NADP(+)</name>
        <dbReference type="ChEBI" id="CHEBI:58349"/>
    </ligand>
</feature>
<feature type="binding site" evidence="1">
    <location>
        <position position="68"/>
    </location>
    <ligand>
        <name>NADP(+)</name>
        <dbReference type="ChEBI" id="CHEBI:58349"/>
    </ligand>
</feature>
<feature type="binding site" evidence="1">
    <location>
        <position position="76"/>
    </location>
    <ligand>
        <name>NADP(+)</name>
        <dbReference type="ChEBI" id="CHEBI:58349"/>
    </ligand>
</feature>
<feature type="binding site" evidence="1">
    <location>
        <position position="78"/>
    </location>
    <ligand>
        <name>NADP(+)</name>
        <dbReference type="ChEBI" id="CHEBI:58349"/>
    </ligand>
</feature>
<feature type="binding site" evidence="1">
    <location>
        <begin position="108"/>
        <end position="110"/>
    </location>
    <ligand>
        <name>NADP(+)</name>
        <dbReference type="ChEBI" id="CHEBI:58349"/>
    </ligand>
</feature>
<feature type="binding site" evidence="1">
    <location>
        <position position="158"/>
    </location>
    <ligand>
        <name>NADP(+)</name>
        <dbReference type="ChEBI" id="CHEBI:58349"/>
    </ligand>
</feature>
<feature type="binding site" evidence="1">
    <location>
        <position position="217"/>
    </location>
    <ligand>
        <name>Mg(2+)</name>
        <dbReference type="ChEBI" id="CHEBI:18420"/>
        <label>1</label>
    </ligand>
</feature>
<feature type="binding site" evidence="1">
    <location>
        <position position="217"/>
    </location>
    <ligand>
        <name>Mg(2+)</name>
        <dbReference type="ChEBI" id="CHEBI:18420"/>
        <label>2</label>
    </ligand>
</feature>
<feature type="binding site" evidence="1">
    <location>
        <position position="221"/>
    </location>
    <ligand>
        <name>Mg(2+)</name>
        <dbReference type="ChEBI" id="CHEBI:18420"/>
        <label>1</label>
    </ligand>
</feature>
<feature type="binding site" evidence="1">
    <location>
        <position position="389"/>
    </location>
    <ligand>
        <name>Mg(2+)</name>
        <dbReference type="ChEBI" id="CHEBI:18420"/>
        <label>2</label>
    </ligand>
</feature>
<feature type="binding site" evidence="1">
    <location>
        <position position="393"/>
    </location>
    <ligand>
        <name>Mg(2+)</name>
        <dbReference type="ChEBI" id="CHEBI:18420"/>
        <label>2</label>
    </ligand>
</feature>
<feature type="binding site" evidence="1">
    <location>
        <position position="414"/>
    </location>
    <ligand>
        <name>substrate</name>
    </ligand>
</feature>
<sequence>MANYFNTLPLREQLAQLAKCRFMDSSEFADGVEALKGKKMVVIGCGAQGLNQGLNLRDSGLDVSYALRPEAIAQKRQSWKNATENGFVVGTYEELIPTADVVLNLTPDKQHTPVVKAVMPLMKEGACLSYSHGFNIVEEGMQIREDLTVIMVAPKCPGSEVRAEYVRGFGVPTLIAVHEDNDPKGEGLALAKAYAVGTGGHKAGVLMSSFIAEVKSDLMGEQTILCGMLQTGSILCFDKMVEEGIDAGYASRLIQYGWETITEALKYGGVTNMLDRLSNPAKIKAFDLSEELKVIMRPLYNKHQDDIISGHFSQTMMEDWANDDKNLLQWRADTAETNFEKTPAGDVEISEQEFFDNGILMVAMVKAGVELAFETMTAAGIIAESAYYESLHETPLIANTIARKKLYEMNATISDTAEYGCYLYNHACVPLLADFMKDIKTDVIGKGLSVEDNGVDNARLIEVNKALRSHPVEAVGAVLRGHMADMKKIV</sequence>
<name>ILVC_MARMS</name>